<protein>
    <recommendedName>
        <fullName>Thioredoxin</fullName>
        <shortName>Trx</shortName>
    </recommendedName>
</protein>
<comment type="function">
    <text evidence="1">Component of the thioredoxin-thioredoxin reductase system. Participates in various redox reactions through the reversible oxidation of its active center dithiol to a disulfide and catalyzes dithiol-disulfide exchange reactions (By similarity).</text>
</comment>
<comment type="similarity">
    <text evidence="3">Belongs to the thioredoxin family.</text>
</comment>
<sequence>MAIVKVTDADFDSKVESGVQLVDFWATWCGPCKMIAPVLEELAADYEGKADILKLDVDENPSTAAKYEVMSIPTLIVFKDGQPVDKVVGFQPKENLAEVLDKHL</sequence>
<keyword id="KW-1015">Disulfide bond</keyword>
<keyword id="KW-0249">Electron transport</keyword>
<keyword id="KW-0676">Redox-active center</keyword>
<keyword id="KW-0813">Transport</keyword>
<dbReference type="EMBL" id="BA000033">
    <property type="protein sequence ID" value="BAB94893.1"/>
    <property type="molecule type" value="Genomic_DNA"/>
</dbReference>
<dbReference type="RefSeq" id="WP_001018928.1">
    <property type="nucleotide sequence ID" value="NC_003923.1"/>
</dbReference>
<dbReference type="SMR" id="P0A0K5"/>
<dbReference type="GeneID" id="98345462"/>
<dbReference type="KEGG" id="sam:MW1028"/>
<dbReference type="HOGENOM" id="CLU_090389_10_2_9"/>
<dbReference type="GO" id="GO:0005829">
    <property type="term" value="C:cytosol"/>
    <property type="evidence" value="ECO:0007669"/>
    <property type="project" value="TreeGrafter"/>
</dbReference>
<dbReference type="GO" id="GO:0015035">
    <property type="term" value="F:protein-disulfide reductase activity"/>
    <property type="evidence" value="ECO:0007669"/>
    <property type="project" value="InterPro"/>
</dbReference>
<dbReference type="GO" id="GO:0045454">
    <property type="term" value="P:cell redox homeostasis"/>
    <property type="evidence" value="ECO:0007669"/>
    <property type="project" value="TreeGrafter"/>
</dbReference>
<dbReference type="CDD" id="cd02947">
    <property type="entry name" value="TRX_family"/>
    <property type="match status" value="1"/>
</dbReference>
<dbReference type="FunFam" id="3.40.30.10:FF:000001">
    <property type="entry name" value="Thioredoxin"/>
    <property type="match status" value="1"/>
</dbReference>
<dbReference type="Gene3D" id="3.40.30.10">
    <property type="entry name" value="Glutaredoxin"/>
    <property type="match status" value="1"/>
</dbReference>
<dbReference type="InterPro" id="IPR005746">
    <property type="entry name" value="Thioredoxin"/>
</dbReference>
<dbReference type="InterPro" id="IPR036249">
    <property type="entry name" value="Thioredoxin-like_sf"/>
</dbReference>
<dbReference type="InterPro" id="IPR017937">
    <property type="entry name" value="Thioredoxin_CS"/>
</dbReference>
<dbReference type="InterPro" id="IPR013766">
    <property type="entry name" value="Thioredoxin_domain"/>
</dbReference>
<dbReference type="NCBIfam" id="TIGR01068">
    <property type="entry name" value="thioredoxin"/>
    <property type="match status" value="1"/>
</dbReference>
<dbReference type="PANTHER" id="PTHR45663">
    <property type="entry name" value="GEO12009P1"/>
    <property type="match status" value="1"/>
</dbReference>
<dbReference type="PANTHER" id="PTHR45663:SF11">
    <property type="entry name" value="GEO12009P1"/>
    <property type="match status" value="1"/>
</dbReference>
<dbReference type="Pfam" id="PF00085">
    <property type="entry name" value="Thioredoxin"/>
    <property type="match status" value="1"/>
</dbReference>
<dbReference type="PIRSF" id="PIRSF000077">
    <property type="entry name" value="Thioredoxin"/>
    <property type="match status" value="1"/>
</dbReference>
<dbReference type="PRINTS" id="PR00421">
    <property type="entry name" value="THIOREDOXIN"/>
</dbReference>
<dbReference type="SUPFAM" id="SSF52833">
    <property type="entry name" value="Thioredoxin-like"/>
    <property type="match status" value="1"/>
</dbReference>
<dbReference type="PROSITE" id="PS00194">
    <property type="entry name" value="THIOREDOXIN_1"/>
    <property type="match status" value="1"/>
</dbReference>
<dbReference type="PROSITE" id="PS51352">
    <property type="entry name" value="THIOREDOXIN_2"/>
    <property type="match status" value="1"/>
</dbReference>
<name>THIO_STAAW</name>
<accession>P0A0K5</accession>
<accession>Q9ZEH4</accession>
<evidence type="ECO:0000250" key="1"/>
<evidence type="ECO:0000255" key="2">
    <source>
        <dbReference type="PROSITE-ProRule" id="PRU00691"/>
    </source>
</evidence>
<evidence type="ECO:0000305" key="3"/>
<proteinExistence type="inferred from homology"/>
<organism>
    <name type="scientific">Staphylococcus aureus (strain MW2)</name>
    <dbReference type="NCBI Taxonomy" id="196620"/>
    <lineage>
        <taxon>Bacteria</taxon>
        <taxon>Bacillati</taxon>
        <taxon>Bacillota</taxon>
        <taxon>Bacilli</taxon>
        <taxon>Bacillales</taxon>
        <taxon>Staphylococcaceae</taxon>
        <taxon>Staphylococcus</taxon>
    </lineage>
</organism>
<gene>
    <name type="primary">trxA</name>
    <name type="ordered locus">MW1028</name>
</gene>
<reference key="1">
    <citation type="journal article" date="2002" name="Lancet">
        <title>Genome and virulence determinants of high virulence community-acquired MRSA.</title>
        <authorList>
            <person name="Baba T."/>
            <person name="Takeuchi F."/>
            <person name="Kuroda M."/>
            <person name="Yuzawa H."/>
            <person name="Aoki K."/>
            <person name="Oguchi A."/>
            <person name="Nagai Y."/>
            <person name="Iwama N."/>
            <person name="Asano K."/>
            <person name="Naimi T."/>
            <person name="Kuroda H."/>
            <person name="Cui L."/>
            <person name="Yamamoto K."/>
            <person name="Hiramatsu K."/>
        </authorList>
    </citation>
    <scope>NUCLEOTIDE SEQUENCE [LARGE SCALE GENOMIC DNA]</scope>
    <source>
        <strain>MW2</strain>
    </source>
</reference>
<feature type="chain" id="PRO_0000120130" description="Thioredoxin">
    <location>
        <begin position="1"/>
        <end position="104"/>
    </location>
</feature>
<feature type="domain" description="Thioredoxin" evidence="2">
    <location>
        <begin position="2"/>
        <end position="104"/>
    </location>
</feature>
<feature type="disulfide bond" description="Redox-active" evidence="2">
    <location>
        <begin position="29"/>
        <end position="32"/>
    </location>
</feature>